<feature type="chain" id="PRO_0000331555" description="Organic solute transporter subunit beta">
    <location>
        <begin position="1"/>
        <end position="128"/>
    </location>
</feature>
<feature type="topological domain" description="Extracellular" evidence="4">
    <location>
        <begin position="1"/>
        <end position="30"/>
    </location>
</feature>
<feature type="transmembrane region" description="Helical" evidence="4">
    <location>
        <begin position="31"/>
        <end position="53"/>
    </location>
</feature>
<feature type="topological domain" description="Cytoplasmic" evidence="4">
    <location>
        <begin position="54"/>
        <end position="128"/>
    </location>
</feature>
<feature type="region of interest" description="Disordered" evidence="5">
    <location>
        <begin position="61"/>
        <end position="80"/>
    </location>
</feature>
<feature type="region of interest" description="Disordered" evidence="5">
    <location>
        <begin position="101"/>
        <end position="128"/>
    </location>
</feature>
<feature type="compositionally biased region" description="Basic and acidic residues" evidence="5">
    <location>
        <begin position="66"/>
        <end position="80"/>
    </location>
</feature>
<feature type="compositionally biased region" description="Basic and acidic residues" evidence="5">
    <location>
        <begin position="101"/>
        <end position="115"/>
    </location>
</feature>
<feature type="modified residue" description="Phosphoserine" evidence="15">
    <location>
        <position position="116"/>
    </location>
</feature>
<feature type="mutagenesis site" description="Does not inhibit transport activity. Does not inhibit colocalization with SLC51A at the plasma membrane. Does not decrease glycosylation of SLC51A." evidence="11">
    <original>ED</original>
    <variation>AA</variation>
    <location>
        <begin position="29"/>
        <end position="30"/>
    </location>
</feature>
<feature type="mutagenesis site" description="Inhibits transport activity. Inhibits weakly colocalization with SLC51A at the plasma membrane. Decreases glycosylation of SLC51A." evidence="11">
    <original>WN</original>
    <variation>AA</variation>
    <location>
        <begin position="34"/>
        <end position="35"/>
    </location>
</feature>
<feature type="mutagenesis site" description="Does not inhibit transport activity. Does not inhibit colocalization with SLC51A at the plasma membrane. Does not decrease glycosylation of SLC51A." evidence="11">
    <original>WN</original>
    <variation>FQ</variation>
    <location>
        <begin position="34"/>
        <end position="35"/>
    </location>
</feature>
<feature type="mutagenesis site" description="Inhibits transport activity. Inhibits localization at the plasma membrane and membrane orientation. Decreases glycosylation of SLC51A." evidence="11">
    <original>RR</original>
    <variation>AA</variation>
    <location>
        <begin position="54"/>
        <end position="55"/>
    </location>
</feature>
<feature type="mutagenesis site" description="Does not inhibit transport activity. Does not inhibit colocalization with SLC51A at the plasma membrane." evidence="11">
    <original>R</original>
    <variation>G</variation>
    <location>
        <position position="61"/>
    </location>
</feature>
<feature type="sequence conflict" description="In Ref. 3; AAI15607." evidence="14" ref="3">
    <original>K</original>
    <variation>Q</variation>
    <location>
        <position position="70"/>
    </location>
</feature>
<accession>Q80WK2</accession>
<accession>Q14BU3</accession>
<accession>Q3V4C1</accession>
<gene>
    <name type="primary">Slc51b</name>
    <name type="synonym">Ostb</name>
</gene>
<comment type="function">
    <text evidence="1 3 6 7 10 11">Essential component of the Ost-alpha/Ost-beta complex, a heterodimer that acts as the intestinal basolateral transporter responsible for bile acid export from enterocytes into portal blood (PubMed:15563450, PubMed:16317684, PubMed:17650074, PubMed:22535958). The Ost-alpha/Ost-beta complex efficiently transports the major species of bile acids (taurocholate) (PubMed:16317684, PubMed:17650074, PubMed:22535958). Taurine conjugates are transported more efficiently across the basolateral membrane than glycine-conjugated bile acids (PubMed:16317684). Can also transport steroids such as estrone 3-sulfate and dehydroepiandrosterone 3-sulfate, therefore playing a role in the enterohepatic circulation of sterols (By similarity). Able to transport eicosanoids such as prostaglandin E2 (By similarity). Modulates SLC51A glycosylation, membrane trafficking and stability activities (PubMed:15563450).</text>
</comment>
<comment type="catalytic activity">
    <reaction evidence="7 10 11">
        <text>taurocholate(out) = taurocholate(in)</text>
        <dbReference type="Rhea" id="RHEA:71703"/>
        <dbReference type="ChEBI" id="CHEBI:36257"/>
    </reaction>
</comment>
<comment type="catalytic activity">
    <reaction evidence="7">
        <text>tauroursodeoxycholate(out) = tauroursodeoxycholate(in)</text>
        <dbReference type="Rhea" id="RHEA:71843"/>
        <dbReference type="ChEBI" id="CHEBI:132028"/>
    </reaction>
</comment>
<comment type="catalytic activity">
    <reaction evidence="7">
        <text>glycoursodeoxycholate(out) = glycoursodeoxycholate(in)</text>
        <dbReference type="Rhea" id="RHEA:71847"/>
        <dbReference type="ChEBI" id="CHEBI:132030"/>
    </reaction>
</comment>
<comment type="catalytic activity">
    <reaction evidence="7">
        <text>glycocholate(out) = glycocholate(in)</text>
        <dbReference type="Rhea" id="RHEA:71851"/>
        <dbReference type="ChEBI" id="CHEBI:29746"/>
    </reaction>
</comment>
<comment type="catalytic activity">
    <reaction evidence="7">
        <text>taurochenodeoxycholate(out) = taurochenodeoxycholate(in)</text>
        <dbReference type="Rhea" id="RHEA:71855"/>
        <dbReference type="ChEBI" id="CHEBI:9407"/>
    </reaction>
</comment>
<comment type="catalytic activity">
    <reaction evidence="7">
        <text>glycochenodeoxycholate(out) = glycochenodeoxycholate(in)</text>
        <dbReference type="Rhea" id="RHEA:71859"/>
        <dbReference type="ChEBI" id="CHEBI:36252"/>
    </reaction>
</comment>
<comment type="catalytic activity">
    <reaction evidence="7">
        <text>taurodeoxycholate(out) = taurodeoxycholate(in)</text>
        <dbReference type="Rhea" id="RHEA:71863"/>
        <dbReference type="ChEBI" id="CHEBI:36261"/>
    </reaction>
</comment>
<comment type="catalytic activity">
    <reaction evidence="7">
        <text>glycodeoxycholate(out) = glycodeoxycholate(in)</text>
        <dbReference type="Rhea" id="RHEA:71867"/>
        <dbReference type="ChEBI" id="CHEBI:82982"/>
    </reaction>
</comment>
<comment type="catalytic activity">
    <reaction evidence="3">
        <text>prostaglandin E2(out) = prostaglandin E2(in)</text>
        <dbReference type="Rhea" id="RHEA:50984"/>
        <dbReference type="ChEBI" id="CHEBI:606564"/>
    </reaction>
</comment>
<comment type="catalytic activity">
    <reaction evidence="2">
        <text>estrone 3-sulfate(out) = estrone 3-sulfate(in)</text>
        <dbReference type="Rhea" id="RHEA:71835"/>
        <dbReference type="ChEBI" id="CHEBI:60050"/>
    </reaction>
</comment>
<comment type="catalytic activity">
    <reaction evidence="2">
        <text>dehydroepiandrosterone 3-sulfate(out) = dehydroepiandrosterone 3-sulfate(in)</text>
        <dbReference type="Rhea" id="RHEA:71839"/>
        <dbReference type="ChEBI" id="CHEBI:57905"/>
    </reaction>
</comment>
<comment type="subunit">
    <text evidence="10">Interacts with SLC51A. The Ost-alpha/Ost-beta complex is a heterodimer composed of alpha (SLC51A) and beta (SLC51B) subunit; induces the transport of SLC51A from the endoplasmic reticulum to the plasma membrane.</text>
</comment>
<comment type="subcellular location">
    <subcellularLocation>
        <location evidence="6 10 11">Cell membrane</location>
        <topology evidence="6 10 11">Single-pass membrane protein</topology>
    </subcellularLocation>
    <text>Mainly restricted to the lateral and basal membranes of ileal enterocytes.</text>
</comment>
<comment type="tissue specificity">
    <text evidence="6">Present at high level in ileum. In ileum, it is restricted to the apical domain on the mature villus enterocytes with little detectable expression in the goblet cells or crypt enterocytes (at protein level). Expressed in kidney but not in heart, brain, liver, spleen, embryo, lung, thymus, ovary nor testis.</text>
</comment>
<comment type="induction">
    <text evidence="8 9">Positively regulated via the bile acid-activated nuclear receptor farnesoid X receptor (NR1H4/FXR).</text>
</comment>
<comment type="domain">
    <text>The transmembrane domain (TM) is the major site of interaction with SLC51A. The extracellular-membrane interface is absolutely required for transport activity. The intracellular-membrane interface is necessary for establishing the correct membrane orientation that is essential for the heterodimer Ost-alpha/Ost-beta complex formation and transport activity at the cell membrane surface.</text>
</comment>
<comment type="similarity">
    <text evidence="14">Belongs to the OST-beta family.</text>
</comment>
<comment type="sequence caution" evidence="14">
    <conflict type="erroneous termination">
        <sequence resource="EMBL-CDS" id="BAE20418"/>
    </conflict>
    <text>Truncated C-terminus.</text>
</comment>
<protein>
    <recommendedName>
        <fullName evidence="13">Organic solute transporter subunit beta</fullName>
        <shortName evidence="12">OST-beta</shortName>
    </recommendedName>
    <alternativeName>
        <fullName>Solute carrier family 51 subunit beta</fullName>
    </alternativeName>
</protein>
<organism>
    <name type="scientific">Mus musculus</name>
    <name type="common">Mouse</name>
    <dbReference type="NCBI Taxonomy" id="10090"/>
    <lineage>
        <taxon>Eukaryota</taxon>
        <taxon>Metazoa</taxon>
        <taxon>Chordata</taxon>
        <taxon>Craniata</taxon>
        <taxon>Vertebrata</taxon>
        <taxon>Euteleostomi</taxon>
        <taxon>Mammalia</taxon>
        <taxon>Eutheria</taxon>
        <taxon>Euarchontoglires</taxon>
        <taxon>Glires</taxon>
        <taxon>Rodentia</taxon>
        <taxon>Myomorpha</taxon>
        <taxon>Muroidea</taxon>
        <taxon>Muridae</taxon>
        <taxon>Murinae</taxon>
        <taxon>Mus</taxon>
        <taxon>Mus</taxon>
    </lineage>
</organism>
<keyword id="KW-1003">Cell membrane</keyword>
<keyword id="KW-0445">Lipid transport</keyword>
<keyword id="KW-0472">Membrane</keyword>
<keyword id="KW-0597">Phosphoprotein</keyword>
<keyword id="KW-1185">Reference proteome</keyword>
<keyword id="KW-0812">Transmembrane</keyword>
<keyword id="KW-1133">Transmembrane helix</keyword>
<keyword id="KW-0813">Transport</keyword>
<sequence>MDHSAEKAAANAEVPQELLEEMLWYFRAEDAAPWNYSILVLAVLVVMTSMFLLRRSILANRNRKKQPQDKETPEDLHLDDSIMKENNSQVFLRETLISEKPDLAPGEPELKEKDSSLVFLPDPQETES</sequence>
<name>OSTB_MOUSE</name>
<dbReference type="EMBL" id="AY279396">
    <property type="protein sequence ID" value="AAP23994.1"/>
    <property type="molecule type" value="mRNA"/>
</dbReference>
<dbReference type="EMBL" id="AK002463">
    <property type="protein sequence ID" value="BAE20415.1"/>
    <property type="molecule type" value="mRNA"/>
</dbReference>
<dbReference type="EMBL" id="AK004188">
    <property type="protein sequence ID" value="BAE20418.1"/>
    <property type="status" value="ALT_SEQ"/>
    <property type="molecule type" value="mRNA"/>
</dbReference>
<dbReference type="EMBL" id="BC115606">
    <property type="protein sequence ID" value="AAI15607.1"/>
    <property type="molecule type" value="mRNA"/>
</dbReference>
<dbReference type="EMBL" id="BC115607">
    <property type="protein sequence ID" value="AAI15608.1"/>
    <property type="molecule type" value="mRNA"/>
</dbReference>
<dbReference type="CCDS" id="CCDS23291.1"/>
<dbReference type="RefSeq" id="NP_849264.1">
    <property type="nucleotide sequence ID" value="NM_178933.2"/>
</dbReference>
<dbReference type="SMR" id="Q80WK2"/>
<dbReference type="FunCoup" id="Q80WK2">
    <property type="interactions" value="108"/>
</dbReference>
<dbReference type="STRING" id="10090.ENSMUSP00000064494"/>
<dbReference type="iPTMnet" id="Q80WK2"/>
<dbReference type="PhosphoSitePlus" id="Q80WK2"/>
<dbReference type="PaxDb" id="10090-ENSMUSP00000064494"/>
<dbReference type="PeptideAtlas" id="Q80WK2"/>
<dbReference type="ProteomicsDB" id="295480"/>
<dbReference type="Antibodypedia" id="1475">
    <property type="antibodies" value="66 antibodies from 11 providers"/>
</dbReference>
<dbReference type="DNASU" id="330962"/>
<dbReference type="Ensembl" id="ENSMUST00000065894.7">
    <property type="protein sequence ID" value="ENSMUSP00000064494.6"/>
    <property type="gene ID" value="ENSMUSG00000053862.7"/>
</dbReference>
<dbReference type="GeneID" id="330962"/>
<dbReference type="KEGG" id="mmu:330962"/>
<dbReference type="UCSC" id="uc009qdg.1">
    <property type="organism name" value="mouse"/>
</dbReference>
<dbReference type="AGR" id="MGI:3582052"/>
<dbReference type="CTD" id="123264"/>
<dbReference type="MGI" id="MGI:3582052">
    <property type="gene designation" value="Slc51b"/>
</dbReference>
<dbReference type="VEuPathDB" id="HostDB:ENSMUSG00000053862"/>
<dbReference type="eggNOG" id="ENOG502S380">
    <property type="taxonomic scope" value="Eukaryota"/>
</dbReference>
<dbReference type="GeneTree" id="ENSGT00390000010409"/>
<dbReference type="HOGENOM" id="CLU_158049_0_0_1"/>
<dbReference type="InParanoid" id="Q80WK2"/>
<dbReference type="OMA" id="EMLWVFR"/>
<dbReference type="OrthoDB" id="9899510at2759"/>
<dbReference type="PhylomeDB" id="Q80WK2"/>
<dbReference type="TreeFam" id="TF337010"/>
<dbReference type="Reactome" id="R-MMU-159418">
    <property type="pathway name" value="Recycling of bile acids and salts"/>
</dbReference>
<dbReference type="BioGRID-ORCS" id="330962">
    <property type="hits" value="0 hits in 76 CRISPR screens"/>
</dbReference>
<dbReference type="ChiTaRS" id="Slc51b">
    <property type="organism name" value="mouse"/>
</dbReference>
<dbReference type="PRO" id="PR:Q80WK2"/>
<dbReference type="Proteomes" id="UP000000589">
    <property type="component" value="Chromosome 9"/>
</dbReference>
<dbReference type="RNAct" id="Q80WK2">
    <property type="molecule type" value="protein"/>
</dbReference>
<dbReference type="Bgee" id="ENSMUSG00000053862">
    <property type="expression patterns" value="Expressed in jejunum and 55 other cell types or tissues"/>
</dbReference>
<dbReference type="GO" id="GO:0016323">
    <property type="term" value="C:basolateral plasma membrane"/>
    <property type="evidence" value="ECO:0000314"/>
    <property type="project" value="UniProtKB"/>
</dbReference>
<dbReference type="GO" id="GO:0016020">
    <property type="term" value="C:membrane"/>
    <property type="evidence" value="ECO:0000314"/>
    <property type="project" value="UniProtKB"/>
</dbReference>
<dbReference type="GO" id="GO:0005886">
    <property type="term" value="C:plasma membrane"/>
    <property type="evidence" value="ECO:0000314"/>
    <property type="project" value="UniProtKB"/>
</dbReference>
<dbReference type="GO" id="GO:0032991">
    <property type="term" value="C:protein-containing complex"/>
    <property type="evidence" value="ECO:0000314"/>
    <property type="project" value="UniProtKB"/>
</dbReference>
<dbReference type="GO" id="GO:0015125">
    <property type="term" value="F:bile acid transmembrane transporter activity"/>
    <property type="evidence" value="ECO:0000353"/>
    <property type="project" value="UniProtKB"/>
</dbReference>
<dbReference type="GO" id="GO:0046982">
    <property type="term" value="F:protein heterodimerization activity"/>
    <property type="evidence" value="ECO:0000314"/>
    <property type="project" value="UniProtKB"/>
</dbReference>
<dbReference type="GO" id="GO:0022857">
    <property type="term" value="F:transmembrane transporter activity"/>
    <property type="evidence" value="ECO:0000353"/>
    <property type="project" value="MGI"/>
</dbReference>
<dbReference type="GO" id="GO:0015721">
    <property type="term" value="P:bile acid and bile salt transport"/>
    <property type="evidence" value="ECO:0000314"/>
    <property type="project" value="UniProtKB"/>
</dbReference>
<dbReference type="GO" id="GO:0032782">
    <property type="term" value="P:bile acid secretion"/>
    <property type="evidence" value="ECO:0007669"/>
    <property type="project" value="Ensembl"/>
</dbReference>
<dbReference type="GO" id="GO:0070863">
    <property type="term" value="P:positive regulation of protein exit from endoplasmic reticulum"/>
    <property type="evidence" value="ECO:0000314"/>
    <property type="project" value="UniProtKB"/>
</dbReference>
<dbReference type="GO" id="GO:0060050">
    <property type="term" value="P:positive regulation of protein glycosylation"/>
    <property type="evidence" value="ECO:0000314"/>
    <property type="project" value="UniProtKB"/>
</dbReference>
<dbReference type="GO" id="GO:0090314">
    <property type="term" value="P:positive regulation of protein targeting to membrane"/>
    <property type="evidence" value="ECO:0000314"/>
    <property type="project" value="UniProtKB"/>
</dbReference>
<dbReference type="GO" id="GO:0031647">
    <property type="term" value="P:regulation of protein stability"/>
    <property type="evidence" value="ECO:0000314"/>
    <property type="project" value="UniProtKB"/>
</dbReference>
<dbReference type="InterPro" id="IPR052678">
    <property type="entry name" value="OST-beta_subunit"/>
</dbReference>
<dbReference type="InterPro" id="IPR029387">
    <property type="entry name" value="OSTbeta"/>
</dbReference>
<dbReference type="PANTHER" id="PTHR36129:SF1">
    <property type="entry name" value="ORGANIC SOLUTE TRANSPORTER SUBUNIT BETA"/>
    <property type="match status" value="1"/>
</dbReference>
<dbReference type="PANTHER" id="PTHR36129">
    <property type="entry name" value="ORGANIC SOLUTE TRANSPORTER SUBUNIT BETA-RELATED"/>
    <property type="match status" value="1"/>
</dbReference>
<dbReference type="Pfam" id="PF15048">
    <property type="entry name" value="OSTbeta"/>
    <property type="match status" value="1"/>
</dbReference>
<reference key="1">
    <citation type="journal article" date="2003" name="J. Biol. Chem.">
        <title>Functional complementation between a novel mammalian polygenic transport complex and an evolutionarily ancient organic solute transporter, OSTalpha-OSTbeta.</title>
        <authorList>
            <person name="Seward D.J."/>
            <person name="Koh A.S."/>
            <person name="Boyer J.L."/>
            <person name="Ballatori N."/>
        </authorList>
    </citation>
    <scope>NUCLEOTIDE SEQUENCE [MRNA]</scope>
    <source>
        <strain>BALB/cJ</strain>
        <tissue>Liver</tissue>
    </source>
</reference>
<reference key="2">
    <citation type="journal article" date="2005" name="Science">
        <title>The transcriptional landscape of the mammalian genome.</title>
        <authorList>
            <person name="Carninci P."/>
            <person name="Kasukawa T."/>
            <person name="Katayama S."/>
            <person name="Gough J."/>
            <person name="Frith M.C."/>
            <person name="Maeda N."/>
            <person name="Oyama R."/>
            <person name="Ravasi T."/>
            <person name="Lenhard B."/>
            <person name="Wells C."/>
            <person name="Kodzius R."/>
            <person name="Shimokawa K."/>
            <person name="Bajic V.B."/>
            <person name="Brenner S.E."/>
            <person name="Batalov S."/>
            <person name="Forrest A.R."/>
            <person name="Zavolan M."/>
            <person name="Davis M.J."/>
            <person name="Wilming L.G."/>
            <person name="Aidinis V."/>
            <person name="Allen J.E."/>
            <person name="Ambesi-Impiombato A."/>
            <person name="Apweiler R."/>
            <person name="Aturaliya R.N."/>
            <person name="Bailey T.L."/>
            <person name="Bansal M."/>
            <person name="Baxter L."/>
            <person name="Beisel K.W."/>
            <person name="Bersano T."/>
            <person name="Bono H."/>
            <person name="Chalk A.M."/>
            <person name="Chiu K.P."/>
            <person name="Choudhary V."/>
            <person name="Christoffels A."/>
            <person name="Clutterbuck D.R."/>
            <person name="Crowe M.L."/>
            <person name="Dalla E."/>
            <person name="Dalrymple B.P."/>
            <person name="de Bono B."/>
            <person name="Della Gatta G."/>
            <person name="di Bernardo D."/>
            <person name="Down T."/>
            <person name="Engstrom P."/>
            <person name="Fagiolini M."/>
            <person name="Faulkner G."/>
            <person name="Fletcher C.F."/>
            <person name="Fukushima T."/>
            <person name="Furuno M."/>
            <person name="Futaki S."/>
            <person name="Gariboldi M."/>
            <person name="Georgii-Hemming P."/>
            <person name="Gingeras T.R."/>
            <person name="Gojobori T."/>
            <person name="Green R.E."/>
            <person name="Gustincich S."/>
            <person name="Harbers M."/>
            <person name="Hayashi Y."/>
            <person name="Hensch T.K."/>
            <person name="Hirokawa N."/>
            <person name="Hill D."/>
            <person name="Huminiecki L."/>
            <person name="Iacono M."/>
            <person name="Ikeo K."/>
            <person name="Iwama A."/>
            <person name="Ishikawa T."/>
            <person name="Jakt M."/>
            <person name="Kanapin A."/>
            <person name="Katoh M."/>
            <person name="Kawasawa Y."/>
            <person name="Kelso J."/>
            <person name="Kitamura H."/>
            <person name="Kitano H."/>
            <person name="Kollias G."/>
            <person name="Krishnan S.P."/>
            <person name="Kruger A."/>
            <person name="Kummerfeld S.K."/>
            <person name="Kurochkin I.V."/>
            <person name="Lareau L.F."/>
            <person name="Lazarevic D."/>
            <person name="Lipovich L."/>
            <person name="Liu J."/>
            <person name="Liuni S."/>
            <person name="McWilliam S."/>
            <person name="Madan Babu M."/>
            <person name="Madera M."/>
            <person name="Marchionni L."/>
            <person name="Matsuda H."/>
            <person name="Matsuzawa S."/>
            <person name="Miki H."/>
            <person name="Mignone F."/>
            <person name="Miyake S."/>
            <person name="Morris K."/>
            <person name="Mottagui-Tabar S."/>
            <person name="Mulder N."/>
            <person name="Nakano N."/>
            <person name="Nakauchi H."/>
            <person name="Ng P."/>
            <person name="Nilsson R."/>
            <person name="Nishiguchi S."/>
            <person name="Nishikawa S."/>
            <person name="Nori F."/>
            <person name="Ohara O."/>
            <person name="Okazaki Y."/>
            <person name="Orlando V."/>
            <person name="Pang K.C."/>
            <person name="Pavan W.J."/>
            <person name="Pavesi G."/>
            <person name="Pesole G."/>
            <person name="Petrovsky N."/>
            <person name="Piazza S."/>
            <person name="Reed J."/>
            <person name="Reid J.F."/>
            <person name="Ring B.Z."/>
            <person name="Ringwald M."/>
            <person name="Rost B."/>
            <person name="Ruan Y."/>
            <person name="Salzberg S.L."/>
            <person name="Sandelin A."/>
            <person name="Schneider C."/>
            <person name="Schoenbach C."/>
            <person name="Sekiguchi K."/>
            <person name="Semple C.A."/>
            <person name="Seno S."/>
            <person name="Sessa L."/>
            <person name="Sheng Y."/>
            <person name="Shibata Y."/>
            <person name="Shimada H."/>
            <person name="Shimada K."/>
            <person name="Silva D."/>
            <person name="Sinclair B."/>
            <person name="Sperling S."/>
            <person name="Stupka E."/>
            <person name="Sugiura K."/>
            <person name="Sultana R."/>
            <person name="Takenaka Y."/>
            <person name="Taki K."/>
            <person name="Tammoja K."/>
            <person name="Tan S.L."/>
            <person name="Tang S."/>
            <person name="Taylor M.S."/>
            <person name="Tegner J."/>
            <person name="Teichmann S.A."/>
            <person name="Ueda H.R."/>
            <person name="van Nimwegen E."/>
            <person name="Verardo R."/>
            <person name="Wei C.L."/>
            <person name="Yagi K."/>
            <person name="Yamanishi H."/>
            <person name="Zabarovsky E."/>
            <person name="Zhu S."/>
            <person name="Zimmer A."/>
            <person name="Hide W."/>
            <person name="Bult C."/>
            <person name="Grimmond S.M."/>
            <person name="Teasdale R.D."/>
            <person name="Liu E.T."/>
            <person name="Brusic V."/>
            <person name="Quackenbush J."/>
            <person name="Wahlestedt C."/>
            <person name="Mattick J.S."/>
            <person name="Hume D.A."/>
            <person name="Kai C."/>
            <person name="Sasaki D."/>
            <person name="Tomaru Y."/>
            <person name="Fukuda S."/>
            <person name="Kanamori-Katayama M."/>
            <person name="Suzuki M."/>
            <person name="Aoki J."/>
            <person name="Arakawa T."/>
            <person name="Iida J."/>
            <person name="Imamura K."/>
            <person name="Itoh M."/>
            <person name="Kato T."/>
            <person name="Kawaji H."/>
            <person name="Kawagashira N."/>
            <person name="Kawashima T."/>
            <person name="Kojima M."/>
            <person name="Kondo S."/>
            <person name="Konno H."/>
            <person name="Nakano K."/>
            <person name="Ninomiya N."/>
            <person name="Nishio T."/>
            <person name="Okada M."/>
            <person name="Plessy C."/>
            <person name="Shibata K."/>
            <person name="Shiraki T."/>
            <person name="Suzuki S."/>
            <person name="Tagami M."/>
            <person name="Waki K."/>
            <person name="Watahiki A."/>
            <person name="Okamura-Oho Y."/>
            <person name="Suzuki H."/>
            <person name="Kawai J."/>
            <person name="Hayashizaki Y."/>
        </authorList>
    </citation>
    <scope>NUCLEOTIDE SEQUENCE [LARGE SCALE MRNA]</scope>
    <source>
        <strain>C57BL/6J</strain>
        <tissue>Kidney</tissue>
    </source>
</reference>
<reference key="3">
    <citation type="journal article" date="2004" name="Genome Res.">
        <title>The status, quality, and expansion of the NIH full-length cDNA project: the Mammalian Gene Collection (MGC).</title>
        <authorList>
            <consortium name="The MGC Project Team"/>
        </authorList>
    </citation>
    <scope>NUCLEOTIDE SEQUENCE [LARGE SCALE MRNA]</scope>
</reference>
<reference key="4">
    <citation type="journal article" date="2005" name="J. Biol. Chem.">
        <title>The heteromeric organic solute transporter alpha-beta, Ostalpha-Ostbeta, is an ileal basolateral bile acid transporter.</title>
        <authorList>
            <person name="Dawson P.A."/>
            <person name="Hubbert M."/>
            <person name="Haywood J."/>
            <person name="Craddock A.L."/>
            <person name="Zerangue N."/>
            <person name="Christian W.V."/>
            <person name="Ballatori N."/>
        </authorList>
    </citation>
    <scope>FUNCTION</scope>
    <scope>SUBCELLULAR LOCATION</scope>
    <scope>TISSUE SPECIFICITY</scope>
</reference>
<reference key="5">
    <citation type="journal article" date="2005" name="Hepatology">
        <title>OSTalpha-OSTbeta: a major basolateral bile acid and steroid transporter in human intestinal, renal, and biliary epithelia.</title>
        <authorList>
            <person name="Ballatori N."/>
            <person name="Christian W.V."/>
            <person name="Lee J.Y."/>
            <person name="Dawson P.A."/>
            <person name="Soroka C.J."/>
            <person name="Boyer J.L."/>
            <person name="Madejczyk M.S."/>
            <person name="Li N."/>
        </authorList>
    </citation>
    <scope>FUNCTION</scope>
    <scope>TRANSPORT ACTIVITY</scope>
</reference>
<reference key="6">
    <citation type="journal article" date="2006" name="Am. J. Physiol.">
        <title>Regulation of the mouse organic solute transporter alpha-beta, Ostalpha-Ostbeta, by bile acids.</title>
        <authorList>
            <person name="Frankenberg T."/>
            <person name="Rao A."/>
            <person name="Chen F."/>
            <person name="Haywood J."/>
            <person name="Shneider B.L."/>
            <person name="Dawson P.A."/>
        </authorList>
    </citation>
    <scope>INDUCTION BY NR1H4</scope>
</reference>
<reference key="7">
    <citation type="journal article" date="2006" name="Hepatology">
        <title>Mrp4-/- mice have an impaired cytoprotective response in obstructive cholestasis.</title>
        <authorList>
            <person name="Mennone A."/>
            <person name="Soroka C.J."/>
            <person name="Cai S.Y."/>
            <person name="Harry K."/>
            <person name="Adachi M."/>
            <person name="Hagey L."/>
            <person name="Schuetz J.D."/>
            <person name="Boyer J.L."/>
        </authorList>
    </citation>
    <scope>INDUCTION</scope>
</reference>
<reference key="8">
    <citation type="journal article" date="2007" name="Biochem. J.">
        <title>Heterodimerization, trafficking and membrane topology of the two proteins, Ost alpha and Ost beta, that constitute the organic solute and steroid transporter.</title>
        <authorList>
            <person name="Li N."/>
            <person name="Cui Z."/>
            <person name="Fang F."/>
            <person name="Lee J.Y."/>
            <person name="Ballatori N."/>
        </authorList>
    </citation>
    <scope>IDENTIFICATION OF THE OST-ALPHA/OST-BETA COMPLEX</scope>
    <scope>SUBCELLULAR LOCATION</scope>
    <scope>TOPOLOGY</scope>
    <scope>INTERACTION WITH SLC51A</scope>
    <scope>FUNCTION</scope>
    <scope>TRANSPORT ACTIVITY</scope>
</reference>
<reference key="9">
    <citation type="journal article" date="2010" name="Cell">
        <title>A tissue-specific atlas of mouse protein phosphorylation and expression.</title>
        <authorList>
            <person name="Huttlin E.L."/>
            <person name="Jedrychowski M.P."/>
            <person name="Elias J.E."/>
            <person name="Goswami T."/>
            <person name="Rad R."/>
            <person name="Beausoleil S.A."/>
            <person name="Villen J."/>
            <person name="Haas W."/>
            <person name="Sowa M.E."/>
            <person name="Gygi S.P."/>
        </authorList>
    </citation>
    <scope>PHOSPHORYLATION [LARGE SCALE ANALYSIS] AT SER-116</scope>
    <scope>IDENTIFICATION BY MASS SPECTROMETRY [LARGE SCALE ANALYSIS]</scope>
    <source>
        <tissue>Kidney</tissue>
    </source>
</reference>
<reference key="10">
    <citation type="journal article" date="2012" name="J. Biol. Chem.">
        <title>beta-Subunit of the Ostalpha-Ostbeta organic solute transporter is required not only for heterodimerization and trafficking but also for function.</title>
        <authorList>
            <person name="Christian W.V."/>
            <person name="Li N."/>
            <person name="Hinkle P.M."/>
            <person name="Ballatori N."/>
        </authorList>
    </citation>
    <scope>FUNCTION OF THE OST-ALPHA/OST-BETA COMPLEX IN BILE TRANSPORT</scope>
    <scope>SUBCELLULAR LOCATION</scope>
    <scope>TOPOLOGY</scope>
    <scope>MUTAGENESIS OF 29-GLU-ASP-30; 34-TRP-ASN-35; 54-ARG-ARG-55 AND ARG-61</scope>
    <scope>TRANSPORT ACTIVITY</scope>
</reference>
<evidence type="ECO:0000250" key="1">
    <source>
        <dbReference type="UniProtKB" id="Q86UW1"/>
    </source>
</evidence>
<evidence type="ECO:0000250" key="2">
    <source>
        <dbReference type="UniProtKB" id="Q86UW2"/>
    </source>
</evidence>
<evidence type="ECO:0000250" key="3">
    <source>
        <dbReference type="UniProtKB" id="Q90YM5"/>
    </source>
</evidence>
<evidence type="ECO:0000255" key="4"/>
<evidence type="ECO:0000256" key="5">
    <source>
        <dbReference type="SAM" id="MobiDB-lite"/>
    </source>
</evidence>
<evidence type="ECO:0000269" key="6">
    <source>
    </source>
</evidence>
<evidence type="ECO:0000269" key="7">
    <source>
    </source>
</evidence>
<evidence type="ECO:0000269" key="8">
    <source>
    </source>
</evidence>
<evidence type="ECO:0000269" key="9">
    <source>
    </source>
</evidence>
<evidence type="ECO:0000269" key="10">
    <source>
    </source>
</evidence>
<evidence type="ECO:0000269" key="11">
    <source>
    </source>
</evidence>
<evidence type="ECO:0000303" key="12">
    <source>
    </source>
</evidence>
<evidence type="ECO:0000303" key="13">
    <source>
    </source>
</evidence>
<evidence type="ECO:0000305" key="14"/>
<evidence type="ECO:0007744" key="15">
    <source>
    </source>
</evidence>
<proteinExistence type="evidence at protein level"/>